<comment type="function">
    <text evidence="1">Negatively regulates transcription of bacterial ribonucleotide reductase nrd genes and operons by binding to NrdR-boxes.</text>
</comment>
<comment type="cofactor">
    <cofactor evidence="1">
        <name>Zn(2+)</name>
        <dbReference type="ChEBI" id="CHEBI:29105"/>
    </cofactor>
    <text evidence="1">Binds 1 zinc ion.</text>
</comment>
<comment type="similarity">
    <text evidence="1">Belongs to the NrdR family.</text>
</comment>
<sequence>MRCPFCGNIDTQVKDSRPAEDHVSIRRRRFCPACGGRFTTYERVQLRDLVVIKSSGKREDFDRTKLERSIRIAMQKRPIEPERIDQMISGIVRRLESLGDTDIPSKVIGEIVMESLARIDTVAYVRFASVYKNFQAADDFDKFVSELRPSAPAEE</sequence>
<keyword id="KW-0067">ATP-binding</keyword>
<keyword id="KW-0238">DNA-binding</keyword>
<keyword id="KW-0479">Metal-binding</keyword>
<keyword id="KW-0547">Nucleotide-binding</keyword>
<keyword id="KW-0678">Repressor</keyword>
<keyword id="KW-0804">Transcription</keyword>
<keyword id="KW-0805">Transcription regulation</keyword>
<keyword id="KW-0862">Zinc</keyword>
<keyword id="KW-0863">Zinc-finger</keyword>
<proteinExistence type="inferred from homology"/>
<evidence type="ECO:0000255" key="1">
    <source>
        <dbReference type="HAMAP-Rule" id="MF_00440"/>
    </source>
</evidence>
<organism>
    <name type="scientific">Cereibacter sphaeroides (strain KD131 / KCTC 12085)</name>
    <name type="common">Rhodobacter sphaeroides</name>
    <dbReference type="NCBI Taxonomy" id="557760"/>
    <lineage>
        <taxon>Bacteria</taxon>
        <taxon>Pseudomonadati</taxon>
        <taxon>Pseudomonadota</taxon>
        <taxon>Alphaproteobacteria</taxon>
        <taxon>Rhodobacterales</taxon>
        <taxon>Paracoccaceae</taxon>
        <taxon>Cereibacter</taxon>
    </lineage>
</organism>
<gene>
    <name evidence="1" type="primary">nrdR</name>
    <name type="ordered locus">RSKD131_1722</name>
</gene>
<protein>
    <recommendedName>
        <fullName evidence="1">Transcriptional repressor NrdR</fullName>
    </recommendedName>
</protein>
<dbReference type="EMBL" id="CP001150">
    <property type="protein sequence ID" value="ACM01582.1"/>
    <property type="molecule type" value="Genomic_DNA"/>
</dbReference>
<dbReference type="RefSeq" id="WP_002720557.1">
    <property type="nucleotide sequence ID" value="NC_011963.1"/>
</dbReference>
<dbReference type="SMR" id="B9KKD5"/>
<dbReference type="GeneID" id="67447126"/>
<dbReference type="KEGG" id="rsk:RSKD131_1722"/>
<dbReference type="HOGENOM" id="CLU_108412_0_1_5"/>
<dbReference type="GO" id="GO:0005524">
    <property type="term" value="F:ATP binding"/>
    <property type="evidence" value="ECO:0007669"/>
    <property type="project" value="UniProtKB-KW"/>
</dbReference>
<dbReference type="GO" id="GO:0003677">
    <property type="term" value="F:DNA binding"/>
    <property type="evidence" value="ECO:0007669"/>
    <property type="project" value="UniProtKB-KW"/>
</dbReference>
<dbReference type="GO" id="GO:0008270">
    <property type="term" value="F:zinc ion binding"/>
    <property type="evidence" value="ECO:0007669"/>
    <property type="project" value="UniProtKB-UniRule"/>
</dbReference>
<dbReference type="GO" id="GO:0045892">
    <property type="term" value="P:negative regulation of DNA-templated transcription"/>
    <property type="evidence" value="ECO:0007669"/>
    <property type="project" value="UniProtKB-UniRule"/>
</dbReference>
<dbReference type="HAMAP" id="MF_00440">
    <property type="entry name" value="NrdR"/>
    <property type="match status" value="1"/>
</dbReference>
<dbReference type="InterPro" id="IPR005144">
    <property type="entry name" value="ATP-cone_dom"/>
</dbReference>
<dbReference type="InterPro" id="IPR055173">
    <property type="entry name" value="NrdR-like_N"/>
</dbReference>
<dbReference type="InterPro" id="IPR003796">
    <property type="entry name" value="RNR_NrdR-like"/>
</dbReference>
<dbReference type="NCBIfam" id="TIGR00244">
    <property type="entry name" value="transcriptional regulator NrdR"/>
    <property type="match status" value="1"/>
</dbReference>
<dbReference type="PANTHER" id="PTHR30455">
    <property type="entry name" value="TRANSCRIPTIONAL REPRESSOR NRDR"/>
    <property type="match status" value="1"/>
</dbReference>
<dbReference type="PANTHER" id="PTHR30455:SF2">
    <property type="entry name" value="TRANSCRIPTIONAL REPRESSOR NRDR"/>
    <property type="match status" value="1"/>
</dbReference>
<dbReference type="Pfam" id="PF03477">
    <property type="entry name" value="ATP-cone"/>
    <property type="match status" value="1"/>
</dbReference>
<dbReference type="Pfam" id="PF22811">
    <property type="entry name" value="Zn_ribbon_NrdR"/>
    <property type="match status" value="1"/>
</dbReference>
<dbReference type="PROSITE" id="PS51161">
    <property type="entry name" value="ATP_CONE"/>
    <property type="match status" value="1"/>
</dbReference>
<reference key="1">
    <citation type="journal article" date="2009" name="J. Bacteriol.">
        <title>Complete genome sequence of Rhodobacter sphaeroides KD131.</title>
        <authorList>
            <person name="Lim S.-K."/>
            <person name="Kim S.J."/>
            <person name="Cha S.H."/>
            <person name="Oh Y.-K."/>
            <person name="Rhee H.-J."/>
            <person name="Kim M.-S."/>
            <person name="Lee J.K."/>
        </authorList>
    </citation>
    <scope>NUCLEOTIDE SEQUENCE [LARGE SCALE GENOMIC DNA]</scope>
    <source>
        <strain>KD131 / KCTC 12085</strain>
    </source>
</reference>
<feature type="chain" id="PRO_1000191810" description="Transcriptional repressor NrdR">
    <location>
        <begin position="1"/>
        <end position="155"/>
    </location>
</feature>
<feature type="domain" description="ATP-cone" evidence="1">
    <location>
        <begin position="49"/>
        <end position="139"/>
    </location>
</feature>
<feature type="zinc finger region" evidence="1">
    <location>
        <begin position="3"/>
        <end position="34"/>
    </location>
</feature>
<name>NRDR_CERSK</name>
<accession>B9KKD5</accession>